<keyword id="KW-0963">Cytoplasm</keyword>
<keyword id="KW-0342">GTP-binding</keyword>
<keyword id="KW-0378">Hydrolase</keyword>
<keyword id="KW-0460">Magnesium</keyword>
<keyword id="KW-0479">Metal-binding</keyword>
<keyword id="KW-0547">Nucleotide-binding</keyword>
<keyword id="KW-0630">Potassium</keyword>
<keyword id="KW-0819">tRNA processing</keyword>
<name>MNME_BACCN</name>
<accession>A7GVP7</accession>
<gene>
    <name evidence="1" type="primary">mnmE</name>
    <name evidence="1" type="synonym">trmE</name>
    <name type="ordered locus">Bcer98_4024</name>
</gene>
<evidence type="ECO:0000255" key="1">
    <source>
        <dbReference type="HAMAP-Rule" id="MF_00379"/>
    </source>
</evidence>
<feature type="chain" id="PRO_1000080000" description="tRNA modification GTPase MnmE">
    <location>
        <begin position="1"/>
        <end position="458"/>
    </location>
</feature>
<feature type="domain" description="TrmE-type G">
    <location>
        <begin position="220"/>
        <end position="379"/>
    </location>
</feature>
<feature type="binding site" evidence="1">
    <location>
        <position position="22"/>
    </location>
    <ligand>
        <name>(6S)-5-formyl-5,6,7,8-tetrahydrofolate</name>
        <dbReference type="ChEBI" id="CHEBI:57457"/>
    </ligand>
</feature>
<feature type="binding site" evidence="1">
    <location>
        <position position="84"/>
    </location>
    <ligand>
        <name>(6S)-5-formyl-5,6,7,8-tetrahydrofolate</name>
        <dbReference type="ChEBI" id="CHEBI:57457"/>
    </ligand>
</feature>
<feature type="binding site" evidence="1">
    <location>
        <position position="123"/>
    </location>
    <ligand>
        <name>(6S)-5-formyl-5,6,7,8-tetrahydrofolate</name>
        <dbReference type="ChEBI" id="CHEBI:57457"/>
    </ligand>
</feature>
<feature type="binding site" evidence="1">
    <location>
        <begin position="230"/>
        <end position="235"/>
    </location>
    <ligand>
        <name>GTP</name>
        <dbReference type="ChEBI" id="CHEBI:37565"/>
    </ligand>
</feature>
<feature type="binding site" evidence="1">
    <location>
        <position position="230"/>
    </location>
    <ligand>
        <name>K(+)</name>
        <dbReference type="ChEBI" id="CHEBI:29103"/>
    </ligand>
</feature>
<feature type="binding site" evidence="1">
    <location>
        <position position="234"/>
    </location>
    <ligand>
        <name>Mg(2+)</name>
        <dbReference type="ChEBI" id="CHEBI:18420"/>
    </ligand>
</feature>
<feature type="binding site" evidence="1">
    <location>
        <begin position="249"/>
        <end position="255"/>
    </location>
    <ligand>
        <name>GTP</name>
        <dbReference type="ChEBI" id="CHEBI:37565"/>
    </ligand>
</feature>
<feature type="binding site" evidence="1">
    <location>
        <position position="249"/>
    </location>
    <ligand>
        <name>K(+)</name>
        <dbReference type="ChEBI" id="CHEBI:29103"/>
    </ligand>
</feature>
<feature type="binding site" evidence="1">
    <location>
        <position position="251"/>
    </location>
    <ligand>
        <name>K(+)</name>
        <dbReference type="ChEBI" id="CHEBI:29103"/>
    </ligand>
</feature>
<feature type="binding site" evidence="1">
    <location>
        <position position="254"/>
    </location>
    <ligand>
        <name>K(+)</name>
        <dbReference type="ChEBI" id="CHEBI:29103"/>
    </ligand>
</feature>
<feature type="binding site" evidence="1">
    <location>
        <position position="255"/>
    </location>
    <ligand>
        <name>Mg(2+)</name>
        <dbReference type="ChEBI" id="CHEBI:18420"/>
    </ligand>
</feature>
<feature type="binding site" evidence="1">
    <location>
        <begin position="274"/>
        <end position="277"/>
    </location>
    <ligand>
        <name>GTP</name>
        <dbReference type="ChEBI" id="CHEBI:37565"/>
    </ligand>
</feature>
<feature type="binding site" evidence="1">
    <location>
        <position position="458"/>
    </location>
    <ligand>
        <name>(6S)-5-formyl-5,6,7,8-tetrahydrofolate</name>
        <dbReference type="ChEBI" id="CHEBI:57457"/>
    </ligand>
</feature>
<dbReference type="EC" id="3.6.-.-" evidence="1"/>
<dbReference type="EMBL" id="CP000764">
    <property type="protein sequence ID" value="ABS24205.1"/>
    <property type="molecule type" value="Genomic_DNA"/>
</dbReference>
<dbReference type="RefSeq" id="WP_012096469.1">
    <property type="nucleotide sequence ID" value="NC_009674.1"/>
</dbReference>
<dbReference type="SMR" id="A7GVP7"/>
<dbReference type="STRING" id="315749.Bcer98_4024"/>
<dbReference type="GeneID" id="33899254"/>
<dbReference type="KEGG" id="bcy:Bcer98_4024"/>
<dbReference type="eggNOG" id="COG0486">
    <property type="taxonomic scope" value="Bacteria"/>
</dbReference>
<dbReference type="HOGENOM" id="CLU_019624_4_1_9"/>
<dbReference type="OrthoDB" id="9805918at2"/>
<dbReference type="Proteomes" id="UP000002300">
    <property type="component" value="Chromosome"/>
</dbReference>
<dbReference type="GO" id="GO:0005829">
    <property type="term" value="C:cytosol"/>
    <property type="evidence" value="ECO:0007669"/>
    <property type="project" value="TreeGrafter"/>
</dbReference>
<dbReference type="GO" id="GO:0005525">
    <property type="term" value="F:GTP binding"/>
    <property type="evidence" value="ECO:0007669"/>
    <property type="project" value="UniProtKB-UniRule"/>
</dbReference>
<dbReference type="GO" id="GO:0003924">
    <property type="term" value="F:GTPase activity"/>
    <property type="evidence" value="ECO:0007669"/>
    <property type="project" value="UniProtKB-UniRule"/>
</dbReference>
<dbReference type="GO" id="GO:0046872">
    <property type="term" value="F:metal ion binding"/>
    <property type="evidence" value="ECO:0007669"/>
    <property type="project" value="UniProtKB-KW"/>
</dbReference>
<dbReference type="GO" id="GO:0030488">
    <property type="term" value="P:tRNA methylation"/>
    <property type="evidence" value="ECO:0007669"/>
    <property type="project" value="TreeGrafter"/>
</dbReference>
<dbReference type="GO" id="GO:0002098">
    <property type="term" value="P:tRNA wobble uridine modification"/>
    <property type="evidence" value="ECO:0007669"/>
    <property type="project" value="TreeGrafter"/>
</dbReference>
<dbReference type="CDD" id="cd04164">
    <property type="entry name" value="trmE"/>
    <property type="match status" value="1"/>
</dbReference>
<dbReference type="CDD" id="cd14858">
    <property type="entry name" value="TrmE_N"/>
    <property type="match status" value="1"/>
</dbReference>
<dbReference type="FunFam" id="3.30.1360.120:FF:000003">
    <property type="entry name" value="tRNA modification GTPase MnmE"/>
    <property type="match status" value="1"/>
</dbReference>
<dbReference type="FunFam" id="3.40.50.300:FF:000494">
    <property type="entry name" value="tRNA modification GTPase MnmE"/>
    <property type="match status" value="1"/>
</dbReference>
<dbReference type="Gene3D" id="3.40.50.300">
    <property type="entry name" value="P-loop containing nucleotide triphosphate hydrolases"/>
    <property type="match status" value="1"/>
</dbReference>
<dbReference type="Gene3D" id="3.30.1360.120">
    <property type="entry name" value="Probable tRNA modification gtpase trme, domain 1"/>
    <property type="match status" value="1"/>
</dbReference>
<dbReference type="Gene3D" id="1.20.120.430">
    <property type="entry name" value="tRNA modification GTPase MnmE domain 2"/>
    <property type="match status" value="1"/>
</dbReference>
<dbReference type="HAMAP" id="MF_00379">
    <property type="entry name" value="GTPase_MnmE"/>
    <property type="match status" value="1"/>
</dbReference>
<dbReference type="InterPro" id="IPR031168">
    <property type="entry name" value="G_TrmE"/>
</dbReference>
<dbReference type="InterPro" id="IPR006073">
    <property type="entry name" value="GTP-bd"/>
</dbReference>
<dbReference type="InterPro" id="IPR018948">
    <property type="entry name" value="GTP-bd_TrmE_N"/>
</dbReference>
<dbReference type="InterPro" id="IPR004520">
    <property type="entry name" value="GTPase_MnmE"/>
</dbReference>
<dbReference type="InterPro" id="IPR027368">
    <property type="entry name" value="MnmE_dom2"/>
</dbReference>
<dbReference type="InterPro" id="IPR025867">
    <property type="entry name" value="MnmE_helical"/>
</dbReference>
<dbReference type="InterPro" id="IPR027417">
    <property type="entry name" value="P-loop_NTPase"/>
</dbReference>
<dbReference type="InterPro" id="IPR005225">
    <property type="entry name" value="Small_GTP-bd"/>
</dbReference>
<dbReference type="InterPro" id="IPR027266">
    <property type="entry name" value="TrmE/GcvT_dom1"/>
</dbReference>
<dbReference type="NCBIfam" id="TIGR00450">
    <property type="entry name" value="mnmE_trmE_thdF"/>
    <property type="match status" value="1"/>
</dbReference>
<dbReference type="NCBIfam" id="NF003661">
    <property type="entry name" value="PRK05291.1-3"/>
    <property type="match status" value="1"/>
</dbReference>
<dbReference type="NCBIfam" id="TIGR00231">
    <property type="entry name" value="small_GTP"/>
    <property type="match status" value="1"/>
</dbReference>
<dbReference type="PANTHER" id="PTHR42714">
    <property type="entry name" value="TRNA MODIFICATION GTPASE GTPBP3"/>
    <property type="match status" value="1"/>
</dbReference>
<dbReference type="PANTHER" id="PTHR42714:SF2">
    <property type="entry name" value="TRNA MODIFICATION GTPASE GTPBP3, MITOCHONDRIAL"/>
    <property type="match status" value="1"/>
</dbReference>
<dbReference type="Pfam" id="PF01926">
    <property type="entry name" value="MMR_HSR1"/>
    <property type="match status" value="1"/>
</dbReference>
<dbReference type="Pfam" id="PF12631">
    <property type="entry name" value="MnmE_helical"/>
    <property type="match status" value="1"/>
</dbReference>
<dbReference type="Pfam" id="PF10396">
    <property type="entry name" value="TrmE_N"/>
    <property type="match status" value="1"/>
</dbReference>
<dbReference type="SUPFAM" id="SSF52540">
    <property type="entry name" value="P-loop containing nucleoside triphosphate hydrolases"/>
    <property type="match status" value="1"/>
</dbReference>
<dbReference type="SUPFAM" id="SSF116878">
    <property type="entry name" value="TrmE connector domain"/>
    <property type="match status" value="1"/>
</dbReference>
<dbReference type="PROSITE" id="PS51709">
    <property type="entry name" value="G_TRME"/>
    <property type="match status" value="1"/>
</dbReference>
<sequence length="458" mass="50881">MEFDTIAAISTALGEGAIAIVRVSGEDAIEKVNRIFKGKDLTAVSSHTIHYGHIVDLDTNQVIEEVMVSIMRAPKTFTREDIVEVNCHGGLVSVNKVLQLILAQGVRLAEPGEFTKRAFLNGRIDLSQAEAVMDLIRAKTDRAMNVAINQMEGRLSKLIGRLRQEILETLAHVEVNIDYPEYDDVEEMTHRILIEKATHVQNEIEKILETSKQGKILREGIATAIIGRPNVGKSSLLNSLVQEKKAIVTDIAGTTRDVIEEYVNVRGVPLRLIDTAGIRETEDIVEQIGVERSKEMMSQADLVLIVVNYSEPLTNEDEELFRAVQGKDFIVIVNKTDLPQKIEMERVTELASEKRVITTSLIEEKGVDELEKAIADLFFEGTIESADMTYVSNARHIGLLTQARKTIGDAIAAIENGVPIDMVQIDLTRTWEILGEITGDTVHESLIDQLFSQFCLGK</sequence>
<reference key="1">
    <citation type="journal article" date="2008" name="Chem. Biol. Interact.">
        <title>Extending the Bacillus cereus group genomics to putative food-borne pathogens of different toxicity.</title>
        <authorList>
            <person name="Lapidus A."/>
            <person name="Goltsman E."/>
            <person name="Auger S."/>
            <person name="Galleron N."/>
            <person name="Segurens B."/>
            <person name="Dossat C."/>
            <person name="Land M.L."/>
            <person name="Broussolle V."/>
            <person name="Brillard J."/>
            <person name="Guinebretiere M.-H."/>
            <person name="Sanchis V."/>
            <person name="Nguen-the C."/>
            <person name="Lereclus D."/>
            <person name="Richardson P."/>
            <person name="Wincker P."/>
            <person name="Weissenbach J."/>
            <person name="Ehrlich S.D."/>
            <person name="Sorokin A."/>
        </authorList>
    </citation>
    <scope>NUCLEOTIDE SEQUENCE [LARGE SCALE GENOMIC DNA]</scope>
    <source>
        <strain>DSM 22905 / CIP 110041 / 391-98 / NVH 391-98</strain>
    </source>
</reference>
<proteinExistence type="inferred from homology"/>
<organism>
    <name type="scientific">Bacillus cytotoxicus (strain DSM 22905 / CIP 110041 / 391-98 / NVH 391-98)</name>
    <dbReference type="NCBI Taxonomy" id="315749"/>
    <lineage>
        <taxon>Bacteria</taxon>
        <taxon>Bacillati</taxon>
        <taxon>Bacillota</taxon>
        <taxon>Bacilli</taxon>
        <taxon>Bacillales</taxon>
        <taxon>Bacillaceae</taxon>
        <taxon>Bacillus</taxon>
        <taxon>Bacillus cereus group</taxon>
    </lineage>
</organism>
<protein>
    <recommendedName>
        <fullName evidence="1">tRNA modification GTPase MnmE</fullName>
        <ecNumber evidence="1">3.6.-.-</ecNumber>
    </recommendedName>
</protein>
<comment type="function">
    <text evidence="1">Exhibits a very high intrinsic GTPase hydrolysis rate. Involved in the addition of a carboxymethylaminomethyl (cmnm) group at the wobble position (U34) of certain tRNAs, forming tRNA-cmnm(5)s(2)U34.</text>
</comment>
<comment type="cofactor">
    <cofactor evidence="1">
        <name>K(+)</name>
        <dbReference type="ChEBI" id="CHEBI:29103"/>
    </cofactor>
    <text evidence="1">Binds 1 potassium ion per subunit.</text>
</comment>
<comment type="subunit">
    <text evidence="1">Homodimer. Heterotetramer of two MnmE and two MnmG subunits.</text>
</comment>
<comment type="subcellular location">
    <subcellularLocation>
        <location evidence="1">Cytoplasm</location>
    </subcellularLocation>
</comment>
<comment type="similarity">
    <text evidence="1">Belongs to the TRAFAC class TrmE-Era-EngA-EngB-Septin-like GTPase superfamily. TrmE GTPase family.</text>
</comment>